<gene>
    <name type="ordered locus">MmarC6_0624</name>
</gene>
<feature type="chain" id="PRO_1000132352" description="AMP phosphorylase">
    <location>
        <begin position="1"/>
        <end position="505"/>
    </location>
</feature>
<feature type="active site" description="Proton donor" evidence="1">
    <location>
        <position position="258"/>
    </location>
</feature>
<feature type="binding site" evidence="1">
    <location>
        <position position="170"/>
    </location>
    <ligand>
        <name>AMP</name>
        <dbReference type="ChEBI" id="CHEBI:456215"/>
    </ligand>
</feature>
<feature type="binding site" evidence="1">
    <location>
        <begin position="196"/>
        <end position="201"/>
    </location>
    <ligand>
        <name>AMP</name>
        <dbReference type="ChEBI" id="CHEBI:456215"/>
    </ligand>
</feature>
<feature type="binding site" evidence="1">
    <location>
        <position position="205"/>
    </location>
    <ligand>
        <name>AMP</name>
        <dbReference type="ChEBI" id="CHEBI:456215"/>
    </ligand>
</feature>
<feature type="binding site" evidence="1">
    <location>
        <position position="266"/>
    </location>
    <ligand>
        <name>AMP</name>
        <dbReference type="ChEBI" id="CHEBI:456215"/>
    </ligand>
</feature>
<feature type="binding site" evidence="1">
    <location>
        <position position="290"/>
    </location>
    <ligand>
        <name>AMP</name>
        <dbReference type="ChEBI" id="CHEBI:456215"/>
    </ligand>
</feature>
<proteinExistence type="inferred from homology"/>
<accession>A9A6M7</accession>
<keyword id="KW-0328">Glycosyltransferase</keyword>
<keyword id="KW-0808">Transferase</keyword>
<name>AMPPA_METM6</name>
<organism>
    <name type="scientific">Methanococcus maripaludis (strain C6 / ATCC BAA-1332)</name>
    <dbReference type="NCBI Taxonomy" id="444158"/>
    <lineage>
        <taxon>Archaea</taxon>
        <taxon>Methanobacteriati</taxon>
        <taxon>Methanobacteriota</taxon>
        <taxon>Methanomada group</taxon>
        <taxon>Methanococci</taxon>
        <taxon>Methanococcales</taxon>
        <taxon>Methanococcaceae</taxon>
        <taxon>Methanococcus</taxon>
    </lineage>
</organism>
<dbReference type="EC" id="2.4.2.57" evidence="1"/>
<dbReference type="EMBL" id="CP000867">
    <property type="protein sequence ID" value="ABX01441.1"/>
    <property type="molecule type" value="Genomic_DNA"/>
</dbReference>
<dbReference type="SMR" id="A9A6M7"/>
<dbReference type="STRING" id="444158.MmarC6_0624"/>
<dbReference type="KEGG" id="mmx:MmarC6_0624"/>
<dbReference type="eggNOG" id="arCOG02013">
    <property type="taxonomic scope" value="Archaea"/>
</dbReference>
<dbReference type="HOGENOM" id="CLU_025040_6_0_2"/>
<dbReference type="OrthoDB" id="9827at2157"/>
<dbReference type="PhylomeDB" id="A9A6M7"/>
<dbReference type="GO" id="GO:0005829">
    <property type="term" value="C:cytosol"/>
    <property type="evidence" value="ECO:0007669"/>
    <property type="project" value="TreeGrafter"/>
</dbReference>
<dbReference type="GO" id="GO:0004645">
    <property type="term" value="F:1,4-alpha-oligoglucan phosphorylase activity"/>
    <property type="evidence" value="ECO:0007669"/>
    <property type="project" value="InterPro"/>
</dbReference>
<dbReference type="GO" id="GO:0016208">
    <property type="term" value="F:AMP binding"/>
    <property type="evidence" value="ECO:0007669"/>
    <property type="project" value="UniProtKB-UniRule"/>
</dbReference>
<dbReference type="GO" id="GO:0016763">
    <property type="term" value="F:pentosyltransferase activity"/>
    <property type="evidence" value="ECO:0007669"/>
    <property type="project" value="UniProtKB-UniRule"/>
</dbReference>
<dbReference type="GO" id="GO:0006196">
    <property type="term" value="P:AMP catabolic process"/>
    <property type="evidence" value="ECO:0007669"/>
    <property type="project" value="UniProtKB-UniRule"/>
</dbReference>
<dbReference type="GO" id="GO:0046125">
    <property type="term" value="P:pyrimidine deoxyribonucleoside metabolic process"/>
    <property type="evidence" value="ECO:0007669"/>
    <property type="project" value="InterPro"/>
</dbReference>
<dbReference type="GO" id="GO:0006206">
    <property type="term" value="P:pyrimidine nucleobase metabolic process"/>
    <property type="evidence" value="ECO:0007669"/>
    <property type="project" value="InterPro"/>
</dbReference>
<dbReference type="Gene3D" id="1.20.970.50">
    <property type="match status" value="1"/>
</dbReference>
<dbReference type="Gene3D" id="2.40.40.20">
    <property type="match status" value="1"/>
</dbReference>
<dbReference type="Gene3D" id="3.40.1030.10">
    <property type="entry name" value="Nucleoside phosphorylase/phosphoribosyltransferase catalytic domain"/>
    <property type="match status" value="1"/>
</dbReference>
<dbReference type="Gene3D" id="3.90.1170.30">
    <property type="entry name" value="Pyrimidine nucleoside phosphorylase-like, C-terminal domain"/>
    <property type="match status" value="1"/>
</dbReference>
<dbReference type="HAMAP" id="MF_02132">
    <property type="entry name" value="AMP_phosphorylase"/>
    <property type="match status" value="1"/>
</dbReference>
<dbReference type="InterPro" id="IPR017713">
    <property type="entry name" value="AMP_phosphorylase"/>
</dbReference>
<dbReference type="InterPro" id="IPR000312">
    <property type="entry name" value="Glycosyl_Trfase_fam3"/>
</dbReference>
<dbReference type="InterPro" id="IPR017459">
    <property type="entry name" value="Glycosyl_Trfase_fam3_N_dom"/>
</dbReference>
<dbReference type="InterPro" id="IPR036320">
    <property type="entry name" value="Glycosyl_Trfase_fam3_N_dom_sf"/>
</dbReference>
<dbReference type="InterPro" id="IPR035902">
    <property type="entry name" value="Nuc_phospho_transferase"/>
</dbReference>
<dbReference type="InterPro" id="IPR036566">
    <property type="entry name" value="PYNP-like_C_sf"/>
</dbReference>
<dbReference type="InterPro" id="IPR013102">
    <property type="entry name" value="PYNP_C"/>
</dbReference>
<dbReference type="InterPro" id="IPR017872">
    <property type="entry name" value="Pyrmidine_PPase_CS"/>
</dbReference>
<dbReference type="InterPro" id="IPR013466">
    <property type="entry name" value="Thymidine/AMP_Pase"/>
</dbReference>
<dbReference type="InterPro" id="IPR000053">
    <property type="entry name" value="Thymidine/pyrmidine_PPase"/>
</dbReference>
<dbReference type="NCBIfam" id="TIGR03327">
    <property type="entry name" value="AMP_phos"/>
    <property type="match status" value="1"/>
</dbReference>
<dbReference type="NCBIfam" id="TIGR02645">
    <property type="entry name" value="ARCH_P_rylase"/>
    <property type="match status" value="1"/>
</dbReference>
<dbReference type="NCBIfam" id="NF003338">
    <property type="entry name" value="PRK04350.1"/>
    <property type="match status" value="1"/>
</dbReference>
<dbReference type="PANTHER" id="PTHR10515">
    <property type="entry name" value="THYMIDINE PHOSPHORYLASE"/>
    <property type="match status" value="1"/>
</dbReference>
<dbReference type="PANTHER" id="PTHR10515:SF0">
    <property type="entry name" value="THYMIDINE PHOSPHORYLASE"/>
    <property type="match status" value="1"/>
</dbReference>
<dbReference type="Pfam" id="PF02885">
    <property type="entry name" value="Glycos_trans_3N"/>
    <property type="match status" value="1"/>
</dbReference>
<dbReference type="Pfam" id="PF00591">
    <property type="entry name" value="Glycos_transf_3"/>
    <property type="match status" value="1"/>
</dbReference>
<dbReference type="Pfam" id="PF07831">
    <property type="entry name" value="PYNP_C"/>
    <property type="match status" value="1"/>
</dbReference>
<dbReference type="PIRSF" id="PIRSF000478">
    <property type="entry name" value="TP_PyNP"/>
    <property type="match status" value="1"/>
</dbReference>
<dbReference type="SMART" id="SM00941">
    <property type="entry name" value="PYNP_C"/>
    <property type="match status" value="1"/>
</dbReference>
<dbReference type="SUPFAM" id="SSF52418">
    <property type="entry name" value="Nucleoside phosphorylase/phosphoribosyltransferase catalytic domain"/>
    <property type="match status" value="1"/>
</dbReference>
<dbReference type="SUPFAM" id="SSF47648">
    <property type="entry name" value="Nucleoside phosphorylase/phosphoribosyltransferase N-terminal domain"/>
    <property type="match status" value="1"/>
</dbReference>
<dbReference type="SUPFAM" id="SSF54680">
    <property type="entry name" value="Pyrimidine nucleoside phosphorylase C-terminal domain"/>
    <property type="match status" value="1"/>
</dbReference>
<dbReference type="PROSITE" id="PS00647">
    <property type="entry name" value="THYMID_PHOSPHORYLASE"/>
    <property type="match status" value="1"/>
</dbReference>
<protein>
    <recommendedName>
        <fullName evidence="1">AMP phosphorylase</fullName>
        <shortName evidence="1">AMPpase</shortName>
        <ecNumber evidence="1">2.4.2.57</ecNumber>
    </recommendedName>
    <alternativeName>
        <fullName evidence="1">Nucleoside monophosphate phosphorylase</fullName>
        <shortName evidence="1">NMP phosphorylase</shortName>
    </alternativeName>
</protein>
<comment type="function">
    <text evidence="1">Catalyzes the conversion of AMP and phosphate to adenine and ribose 1,5-bisphosphate (R15P). Exhibits phosphorylase activity toward CMP and UMP in addition to AMP. Functions in an archaeal AMP degradation pathway, together with R15P isomerase and RubisCO.</text>
</comment>
<comment type="catalytic activity">
    <reaction evidence="1">
        <text>AMP + phosphate = alpha-D-ribose 1,5-bisphosphate + adenine</text>
        <dbReference type="Rhea" id="RHEA:36975"/>
        <dbReference type="ChEBI" id="CHEBI:16708"/>
        <dbReference type="ChEBI" id="CHEBI:43474"/>
        <dbReference type="ChEBI" id="CHEBI:68688"/>
        <dbReference type="ChEBI" id="CHEBI:456215"/>
        <dbReference type="EC" id="2.4.2.57"/>
    </reaction>
</comment>
<comment type="catalytic activity">
    <reaction evidence="1">
        <text>CMP + phosphate = cytosine + alpha-D-ribose 1,5-bisphosphate</text>
        <dbReference type="Rhea" id="RHEA:36987"/>
        <dbReference type="ChEBI" id="CHEBI:16040"/>
        <dbReference type="ChEBI" id="CHEBI:43474"/>
        <dbReference type="ChEBI" id="CHEBI:60377"/>
        <dbReference type="ChEBI" id="CHEBI:68688"/>
        <dbReference type="EC" id="2.4.2.57"/>
    </reaction>
</comment>
<comment type="catalytic activity">
    <reaction evidence="1">
        <text>UMP + phosphate = alpha-D-ribose 1,5-bisphosphate + uracil</text>
        <dbReference type="Rhea" id="RHEA:36991"/>
        <dbReference type="ChEBI" id="CHEBI:17568"/>
        <dbReference type="ChEBI" id="CHEBI:43474"/>
        <dbReference type="ChEBI" id="CHEBI:57865"/>
        <dbReference type="ChEBI" id="CHEBI:68688"/>
        <dbReference type="EC" id="2.4.2.57"/>
    </reaction>
</comment>
<comment type="similarity">
    <text evidence="1">Belongs to the thymidine/pyrimidine-nucleoside phosphorylase family. Type 2 subfamily.</text>
</comment>
<evidence type="ECO:0000255" key="1">
    <source>
        <dbReference type="HAMAP-Rule" id="MF_02132"/>
    </source>
</evidence>
<sequence>MLFLNAKFIDLDLGENAVIVNDEDLKGTSYYPQDRVLIESHAGAVIGNIYSTKTMVKKGEVGMLVKELKEVSISEGEEVKLRHAEKPESIPFIKKKMDGQVLNPHEIRTIIDEIVSKKLSNIELSAFVSSTYINGMNMDEISEMTKRIAETGDMISWEKSLVVDIHSIGGVPGNKYALLSIPILAAAGITIPKTSSRAITSPAGTADVMEVLTNVELKEEEIKRIVKTTNGCLAWGGGVNLAPADDIIINVERPVSIDPQPQLLASVMAKKIATGIKYTVIDIPVGKGVKIKNEAEGAKLARKFIELGELLNIKVECVLTYGGQPLGRAIGPALEAREAIEALQDPKNAPKSLIEKALSLAGILLELGGAAQIGEGQKLAWEILESGRALEKFNQIITEQGGTPKKPEEIELGEYVEEIIAPIDGYITDISNTAITNVVKEAGAPRDKKAGILLNSKIGNQVKQGDILYTIYSGSEERLVSAVNLARRVYPVKVEGMLIERISKF</sequence>
<reference key="1">
    <citation type="submission" date="2007-10" db="EMBL/GenBank/DDBJ databases">
        <title>Complete sequence of Methanococcus maripaludis C6.</title>
        <authorList>
            <consortium name="US DOE Joint Genome Institute"/>
            <person name="Copeland A."/>
            <person name="Lucas S."/>
            <person name="Lapidus A."/>
            <person name="Barry K."/>
            <person name="Glavina del Rio T."/>
            <person name="Dalin E."/>
            <person name="Tice H."/>
            <person name="Pitluck S."/>
            <person name="Clum A."/>
            <person name="Schmutz J."/>
            <person name="Larimer F."/>
            <person name="Land M."/>
            <person name="Hauser L."/>
            <person name="Kyrpides N."/>
            <person name="Mikhailova N."/>
            <person name="Sieprawska-Lupa M."/>
            <person name="Whitman W.B."/>
            <person name="Richardson P."/>
        </authorList>
    </citation>
    <scope>NUCLEOTIDE SEQUENCE [LARGE SCALE GENOMIC DNA]</scope>
    <source>
        <strain>C6 / ATCC BAA-1332</strain>
    </source>
</reference>